<accession>B5FXE5</accession>
<dbReference type="EC" id="1.6.5.-" evidence="2"/>
<dbReference type="EMBL" id="DQ213309">
    <property type="protein sequence ID" value="ACH43706.1"/>
    <property type="molecule type" value="mRNA"/>
</dbReference>
<dbReference type="RefSeq" id="NP_001232472.1">
    <property type="nucleotide sequence ID" value="NM_001245543.1"/>
</dbReference>
<dbReference type="SMR" id="B5FXE5"/>
<dbReference type="FunCoup" id="B5FXE5">
    <property type="interactions" value="56"/>
</dbReference>
<dbReference type="STRING" id="59729.ENSTGUP00000004247"/>
<dbReference type="GeneID" id="100190613"/>
<dbReference type="KEGG" id="tgu:100190613"/>
<dbReference type="CTD" id="84883"/>
<dbReference type="InParanoid" id="B5FXE5"/>
<dbReference type="OrthoDB" id="3244603at2759"/>
<dbReference type="Proteomes" id="UP000007754">
    <property type="component" value="Unplaced"/>
</dbReference>
<dbReference type="GO" id="GO:0005811">
    <property type="term" value="C:lipid droplet"/>
    <property type="evidence" value="ECO:0007669"/>
    <property type="project" value="UniProtKB-SubCell"/>
</dbReference>
<dbReference type="GO" id="GO:0031966">
    <property type="term" value="C:mitochondrial membrane"/>
    <property type="evidence" value="ECO:0007669"/>
    <property type="project" value="UniProtKB-SubCell"/>
</dbReference>
<dbReference type="GO" id="GO:0005634">
    <property type="term" value="C:nucleus"/>
    <property type="evidence" value="ECO:0007669"/>
    <property type="project" value="UniProtKB-SubCell"/>
</dbReference>
<dbReference type="GO" id="GO:0005886">
    <property type="term" value="C:plasma membrane"/>
    <property type="evidence" value="ECO:0007669"/>
    <property type="project" value="UniProtKB-SubCell"/>
</dbReference>
<dbReference type="GO" id="GO:0004174">
    <property type="term" value="F:electron-transferring-flavoprotein dehydrogenase activity"/>
    <property type="evidence" value="ECO:0007669"/>
    <property type="project" value="TreeGrafter"/>
</dbReference>
<dbReference type="GO" id="GO:0050660">
    <property type="term" value="F:flavin adenine dinucleotide binding"/>
    <property type="evidence" value="ECO:0007669"/>
    <property type="project" value="TreeGrafter"/>
</dbReference>
<dbReference type="GO" id="GO:0016655">
    <property type="term" value="F:oxidoreductase activity, acting on NAD(P)H, quinone or similar compound as acceptor"/>
    <property type="evidence" value="ECO:0000250"/>
    <property type="project" value="UniProtKB"/>
</dbReference>
<dbReference type="GO" id="GO:0008637">
    <property type="term" value="P:apoptotic mitochondrial changes"/>
    <property type="evidence" value="ECO:0007669"/>
    <property type="project" value="TreeGrafter"/>
</dbReference>
<dbReference type="GO" id="GO:0043065">
    <property type="term" value="P:positive regulation of apoptotic process"/>
    <property type="evidence" value="ECO:0007669"/>
    <property type="project" value="TreeGrafter"/>
</dbReference>
<dbReference type="GO" id="GO:0042373">
    <property type="term" value="P:vitamin K metabolic process"/>
    <property type="evidence" value="ECO:0000250"/>
    <property type="project" value="UniProtKB"/>
</dbReference>
<dbReference type="FunFam" id="3.50.50.100:FF:000003">
    <property type="entry name" value="Apoptosis-inducing factor, mitochondrion-associated, 2"/>
    <property type="match status" value="1"/>
</dbReference>
<dbReference type="Gene3D" id="3.50.50.100">
    <property type="match status" value="1"/>
</dbReference>
<dbReference type="InterPro" id="IPR036188">
    <property type="entry name" value="FAD/NAD-bd_sf"/>
</dbReference>
<dbReference type="InterPro" id="IPR023753">
    <property type="entry name" value="FAD/NAD-binding_dom"/>
</dbReference>
<dbReference type="PANTHER" id="PTHR43735">
    <property type="entry name" value="APOPTOSIS-INDUCING FACTOR 1"/>
    <property type="match status" value="1"/>
</dbReference>
<dbReference type="PANTHER" id="PTHR43735:SF3">
    <property type="entry name" value="FERROPTOSIS SUPPRESSOR PROTEIN 1"/>
    <property type="match status" value="1"/>
</dbReference>
<dbReference type="Pfam" id="PF07992">
    <property type="entry name" value="Pyr_redox_2"/>
    <property type="match status" value="1"/>
</dbReference>
<dbReference type="PRINTS" id="PR00368">
    <property type="entry name" value="FADPNR"/>
</dbReference>
<dbReference type="PRINTS" id="PR00469">
    <property type="entry name" value="PNDRDTASEII"/>
</dbReference>
<dbReference type="SUPFAM" id="SSF51905">
    <property type="entry name" value="FAD/NAD(P)-binding domain"/>
    <property type="match status" value="1"/>
</dbReference>
<feature type="initiator methionine" description="Removed" evidence="2">
    <location>
        <position position="1"/>
    </location>
</feature>
<feature type="chain" id="PRO_0000366944" description="Ferroptosis suppressor protein 1">
    <location>
        <begin position="2"/>
        <end position="373"/>
    </location>
</feature>
<feature type="transmembrane region" description="Helical" evidence="3">
    <location>
        <begin position="13"/>
        <end position="29"/>
    </location>
</feature>
<feature type="binding site" evidence="3">
    <location>
        <begin position="17"/>
        <end position="21"/>
    </location>
    <ligand>
        <name>6-hydroxy-FAD</name>
        <dbReference type="ChEBI" id="CHEBI:60470"/>
    </ligand>
</feature>
<feature type="binding site" evidence="3">
    <location>
        <position position="53"/>
    </location>
    <ligand>
        <name>6-hydroxy-FAD</name>
        <dbReference type="ChEBI" id="CHEBI:60470"/>
    </ligand>
</feature>
<feature type="binding site" evidence="3">
    <location>
        <position position="81"/>
    </location>
    <ligand>
        <name>6-hydroxy-FAD</name>
        <dbReference type="ChEBI" id="CHEBI:60470"/>
    </ligand>
</feature>
<feature type="binding site" evidence="3">
    <location>
        <position position="284"/>
    </location>
    <ligand>
        <name>6-hydroxy-FAD</name>
        <dbReference type="ChEBI" id="CHEBI:60470"/>
    </ligand>
</feature>
<feature type="site" description="4-hydroxy-2-nonenal adduction" evidence="1">
    <location>
        <position position="173"/>
    </location>
</feature>
<feature type="modified residue" description="N6-acetyllysine" evidence="2">
    <location>
        <position position="167"/>
    </location>
</feature>
<feature type="lipid moiety-binding region" description="N-myristoyl glycine" evidence="2">
    <location>
        <position position="2"/>
    </location>
</feature>
<sequence length="373" mass="40394">MGSRLSLDGSVRVVVVGGGFGGTAAASLLKSWAVPFVLVDVRDAFHHNVAALRAAVESGFAKKTFISYSVTFGDSFRQGKVVAIDPGRQQVVLSDGEELHYSHLILATGSDGPFPGKFNQVIDMESAIQTYEDMVKEIEKSQRILVVGGGAAGVEMAAEIKTEYPGKEIILIHSKTALADVELLPSVRQVVKEILLRKGVRLLLSEKVSDIENLRPNQFQKDMVVRTEKGTEVVVDMVVLCTGIKINSSAYAAAFGDKMASDGALKVNKHLQLEGYENIYAIGDCADLKEPKMAYHAGLHANVVVTNIINSLTQKPLKTYEPGSLTFLLSMGRNDGVGQVNGYYVGRLLVTIAKSRDLFVSKSWRTMGQTMPS</sequence>
<evidence type="ECO:0000250" key="1">
    <source>
        <dbReference type="UniProtKB" id="Q8BUE4"/>
    </source>
</evidence>
<evidence type="ECO:0000250" key="2">
    <source>
        <dbReference type="UniProtKB" id="Q9BRQ8"/>
    </source>
</evidence>
<evidence type="ECO:0000255" key="3"/>
<evidence type="ECO:0000305" key="4"/>
<reference key="1">
    <citation type="journal article" date="2006" name="Proc. Natl. Acad. Sci. U.S.A.">
        <title>A molecular neuroethological approach for identifying and characterizing a cascade of behaviorally regulated genes.</title>
        <authorList>
            <person name="Wada K."/>
            <person name="Howard J.T."/>
            <person name="McConnell P."/>
            <person name="Whitney O."/>
            <person name="Lints T."/>
            <person name="Rivas M.V."/>
            <person name="Horita H."/>
            <person name="Patterson M.A."/>
            <person name="White S.A."/>
            <person name="Scharff C."/>
            <person name="Haesler S."/>
            <person name="Zhao S."/>
            <person name="Sakaguchi H."/>
            <person name="Hagiwara M."/>
            <person name="Shiraki T."/>
            <person name="Hirozane-Kishikawa T."/>
            <person name="Skene P."/>
            <person name="Hayashizaki Y."/>
            <person name="Carninci P."/>
            <person name="Jarvis E.D."/>
        </authorList>
    </citation>
    <scope>NUCLEOTIDE SEQUENCE [LARGE SCALE MRNA]</scope>
    <source>
        <tissue>Brain</tissue>
    </source>
</reference>
<protein>
    <recommendedName>
        <fullName evidence="2">Ferroptosis suppressor protein 1</fullName>
        <shortName evidence="2">FSP1</shortName>
        <ecNumber evidence="2">1.6.5.-</ecNumber>
    </recommendedName>
    <alternativeName>
        <fullName>Apoptosis-inducing factor homologous mitochondrion-associated inducer of death</fullName>
        <shortName>AMID</shortName>
    </alternativeName>
    <alternativeName>
        <fullName>p53-responsive gene 3 protein</fullName>
    </alternativeName>
</protein>
<keyword id="KW-0007">Acetylation</keyword>
<keyword id="KW-0053">Apoptosis</keyword>
<keyword id="KW-1003">Cell membrane</keyword>
<keyword id="KW-0963">Cytoplasm</keyword>
<keyword id="KW-0274">FAD</keyword>
<keyword id="KW-0285">Flavoprotein</keyword>
<keyword id="KW-0551">Lipid droplet</keyword>
<keyword id="KW-0449">Lipoprotein</keyword>
<keyword id="KW-0472">Membrane</keyword>
<keyword id="KW-0496">Mitochondrion</keyword>
<keyword id="KW-0519">Myristate</keyword>
<keyword id="KW-0539">Nucleus</keyword>
<keyword id="KW-0560">Oxidoreductase</keyword>
<keyword id="KW-1185">Reference proteome</keyword>
<keyword id="KW-0812">Transmembrane</keyword>
<keyword id="KW-1133">Transmembrane helix</keyword>
<keyword id="KW-0832">Ubl conjugation</keyword>
<proteinExistence type="evidence at transcript level"/>
<comment type="function">
    <text evidence="2">A NAD(P)H-dependent oxidoreductase that acts as a key inhibitor of ferroptosis. At the plasma membrane, catalyzes reduction of coenzyme Q/ubiquinone-10 to ubiquinol-10, a lipophilic radical-trapping antioxidant that prevents lipid oxidative damage and consequently ferroptosis. Acts in parallel to GPX4 to suppress phospholipid peroxidation and ferroptosis. This anti-ferroptotic function is independent of cellular glutathione levels. Also acts as a potent radical-trapping antioxidant by mediating warfarin-resistant vitamin K reduction in the canonical vitamin K cycle: catalyzes NAD(P)H-dependent reduction of vitamin K (phylloquinone, menaquinone-4 and menadione) to hydroquinone forms. Hydroquinones act as potent radical-trapping antioxidants inhibitor of phospholipid peroxidation and ferroptosis. May play a role in mitochondrial stress signaling. Upon oxidative stress, associates with the lipid peroxidation end product 4-hydroxy-2-nonenal (HNE) forming a lipid adduct devoid of oxidoreductase activity, which then translocates from mitochondria into the nucleus triggering DNA damage and cell death.</text>
</comment>
<comment type="catalytic activity">
    <reaction evidence="2">
        <text>ubiquinone-10 + NADH + H(+) = ubiquinol-10 + NAD(+)</text>
        <dbReference type="Rhea" id="RHEA:61984"/>
        <dbReference type="ChEBI" id="CHEBI:15378"/>
        <dbReference type="ChEBI" id="CHEBI:46245"/>
        <dbReference type="ChEBI" id="CHEBI:57540"/>
        <dbReference type="ChEBI" id="CHEBI:57945"/>
        <dbReference type="ChEBI" id="CHEBI:64183"/>
    </reaction>
    <physiologicalReaction direction="left-to-right" evidence="2">
        <dbReference type="Rhea" id="RHEA:61985"/>
    </physiologicalReaction>
</comment>
<comment type="catalytic activity">
    <reaction evidence="2">
        <text>phylloquinone + NADH + H(+) = phylloquinol + NAD(+)</text>
        <dbReference type="Rhea" id="RHEA:74075"/>
        <dbReference type="ChEBI" id="CHEBI:15378"/>
        <dbReference type="ChEBI" id="CHEBI:18067"/>
        <dbReference type="ChEBI" id="CHEBI:28433"/>
        <dbReference type="ChEBI" id="CHEBI:57540"/>
        <dbReference type="ChEBI" id="CHEBI:57945"/>
    </reaction>
    <physiologicalReaction direction="left-to-right" evidence="2">
        <dbReference type="Rhea" id="RHEA:74076"/>
    </physiologicalReaction>
</comment>
<comment type="catalytic activity">
    <reaction evidence="2">
        <text>menaquinone-4 + NADH + H(+) = menaquinol-4 + NAD(+)</text>
        <dbReference type="Rhea" id="RHEA:74079"/>
        <dbReference type="ChEBI" id="CHEBI:15378"/>
        <dbReference type="ChEBI" id="CHEBI:57540"/>
        <dbReference type="ChEBI" id="CHEBI:57945"/>
        <dbReference type="ChEBI" id="CHEBI:78277"/>
        <dbReference type="ChEBI" id="CHEBI:193091"/>
    </reaction>
    <physiologicalReaction direction="left-to-right" evidence="2">
        <dbReference type="Rhea" id="RHEA:74080"/>
    </physiologicalReaction>
</comment>
<comment type="catalytic activity">
    <reaction evidence="2">
        <text>menadione + NADH + H(+) = menadiol + NAD(+)</text>
        <dbReference type="Rhea" id="RHEA:69695"/>
        <dbReference type="ChEBI" id="CHEBI:6746"/>
        <dbReference type="ChEBI" id="CHEBI:15378"/>
        <dbReference type="ChEBI" id="CHEBI:28869"/>
        <dbReference type="ChEBI" id="CHEBI:57540"/>
        <dbReference type="ChEBI" id="CHEBI:57945"/>
    </reaction>
    <physiologicalReaction direction="left-to-right" evidence="2">
        <dbReference type="Rhea" id="RHEA:69696"/>
    </physiologicalReaction>
</comment>
<comment type="cofactor">
    <cofactor evidence="2">
        <name>6-hydroxy-FAD</name>
        <dbReference type="ChEBI" id="CHEBI:60470"/>
    </cofactor>
    <text evidence="2">Binds 6-hydroxy-FAD non-covalently.</text>
</comment>
<comment type="activity regulation">
    <text evidence="1">The modification by 4-hydroxy-2-nonenal (HNE) adduction in mitochondria results in loss of the oxidoreductase activity and activation of a novel function in mitochondrial oxidative stress signaling.</text>
</comment>
<comment type="subcellular location">
    <subcellularLocation>
        <location evidence="2">Lipid droplet</location>
    </subcellularLocation>
    <subcellularLocation>
        <location evidence="2">Cell membrane</location>
        <topology evidence="4">Lipid-anchor</topology>
    </subcellularLocation>
    <subcellularLocation>
        <location evidence="2">Cytoplasm</location>
    </subcellularLocation>
    <subcellularLocation>
        <location evidence="2">Mitochondrion membrane</location>
    </subcellularLocation>
    <subcellularLocation>
        <location evidence="2">Nucleus</location>
    </subcellularLocation>
</comment>
<comment type="PTM">
    <text evidence="2">N-myristoylation at Gly-2 mediates the recruitment to lipid droplets and plasma membrane.</text>
</comment>
<comment type="PTM">
    <text evidence="2">Acetylation at Lys-167 prevents AIFM2 ubiquitination and degradation, thereby inhibiting ferroptosis. KAT2B mediates acetylation at Lys-167, while HDAC3 removes it.</text>
</comment>
<comment type="PTM">
    <text evidence="2">Ubiquitinated. AIFM2 undergoes 'Lys-29'-ubiquitination and proteasomal degradation, which is inhibited by acetylation at Lys-167.</text>
</comment>
<comment type="similarity">
    <text evidence="4">Belongs to the FAD-dependent oxidoreductase family.</text>
</comment>
<name>FSP1_TAEGU</name>
<organism>
    <name type="scientific">Taeniopygia guttata</name>
    <name type="common">Zebra finch</name>
    <name type="synonym">Poephila guttata</name>
    <dbReference type="NCBI Taxonomy" id="59729"/>
    <lineage>
        <taxon>Eukaryota</taxon>
        <taxon>Metazoa</taxon>
        <taxon>Chordata</taxon>
        <taxon>Craniata</taxon>
        <taxon>Vertebrata</taxon>
        <taxon>Euteleostomi</taxon>
        <taxon>Archelosauria</taxon>
        <taxon>Archosauria</taxon>
        <taxon>Dinosauria</taxon>
        <taxon>Saurischia</taxon>
        <taxon>Theropoda</taxon>
        <taxon>Coelurosauria</taxon>
        <taxon>Aves</taxon>
        <taxon>Neognathae</taxon>
        <taxon>Neoaves</taxon>
        <taxon>Telluraves</taxon>
        <taxon>Australaves</taxon>
        <taxon>Passeriformes</taxon>
        <taxon>Passeroidea</taxon>
        <taxon>Estrildidae</taxon>
        <taxon>Estrildinae</taxon>
        <taxon>Taeniopygia</taxon>
    </lineage>
</organism>
<gene>
    <name type="primary">AIFM2</name>
</gene>